<evidence type="ECO:0000255" key="1">
    <source>
        <dbReference type="HAMAP-Rule" id="MF_00508"/>
    </source>
</evidence>
<evidence type="ECO:0000305" key="2"/>
<gene>
    <name evidence="1" type="primary">rpsJ</name>
    <name type="ordered locus">Strop_3924</name>
</gene>
<sequence>MAGQKIRIRLKAYDHEVVDSSARKIVETVTRTGAQVAGPVPLPTEINRFCVIRSPHKYKDSREHFEMRTHKRLIDIIDPTPKTVDSLMRLDLPAGVDIEIKL</sequence>
<keyword id="KW-1185">Reference proteome</keyword>
<keyword id="KW-0687">Ribonucleoprotein</keyword>
<keyword id="KW-0689">Ribosomal protein</keyword>
<dbReference type="EMBL" id="CP000667">
    <property type="protein sequence ID" value="ABP56354.1"/>
    <property type="molecule type" value="Genomic_DNA"/>
</dbReference>
<dbReference type="RefSeq" id="WP_007073037.1">
    <property type="nucleotide sequence ID" value="NC_009380.1"/>
</dbReference>
<dbReference type="SMR" id="A4XBP7"/>
<dbReference type="STRING" id="369723.Strop_3924"/>
<dbReference type="GeneID" id="95800203"/>
<dbReference type="KEGG" id="stp:Strop_3924"/>
<dbReference type="eggNOG" id="COG0051">
    <property type="taxonomic scope" value="Bacteria"/>
</dbReference>
<dbReference type="HOGENOM" id="CLU_122625_1_3_11"/>
<dbReference type="Proteomes" id="UP000000235">
    <property type="component" value="Chromosome"/>
</dbReference>
<dbReference type="GO" id="GO:1990904">
    <property type="term" value="C:ribonucleoprotein complex"/>
    <property type="evidence" value="ECO:0007669"/>
    <property type="project" value="UniProtKB-KW"/>
</dbReference>
<dbReference type="GO" id="GO:0005840">
    <property type="term" value="C:ribosome"/>
    <property type="evidence" value="ECO:0007669"/>
    <property type="project" value="UniProtKB-KW"/>
</dbReference>
<dbReference type="GO" id="GO:0003735">
    <property type="term" value="F:structural constituent of ribosome"/>
    <property type="evidence" value="ECO:0007669"/>
    <property type="project" value="InterPro"/>
</dbReference>
<dbReference type="GO" id="GO:0000049">
    <property type="term" value="F:tRNA binding"/>
    <property type="evidence" value="ECO:0007669"/>
    <property type="project" value="UniProtKB-UniRule"/>
</dbReference>
<dbReference type="GO" id="GO:0006412">
    <property type="term" value="P:translation"/>
    <property type="evidence" value="ECO:0007669"/>
    <property type="project" value="UniProtKB-UniRule"/>
</dbReference>
<dbReference type="FunFam" id="3.30.70.600:FF:000001">
    <property type="entry name" value="30S ribosomal protein S10"/>
    <property type="match status" value="1"/>
</dbReference>
<dbReference type="Gene3D" id="3.30.70.600">
    <property type="entry name" value="Ribosomal protein S10 domain"/>
    <property type="match status" value="1"/>
</dbReference>
<dbReference type="HAMAP" id="MF_00508">
    <property type="entry name" value="Ribosomal_uS10"/>
    <property type="match status" value="1"/>
</dbReference>
<dbReference type="InterPro" id="IPR001848">
    <property type="entry name" value="Ribosomal_uS10"/>
</dbReference>
<dbReference type="InterPro" id="IPR018268">
    <property type="entry name" value="Ribosomal_uS10_CS"/>
</dbReference>
<dbReference type="InterPro" id="IPR027486">
    <property type="entry name" value="Ribosomal_uS10_dom"/>
</dbReference>
<dbReference type="InterPro" id="IPR036838">
    <property type="entry name" value="Ribosomal_uS10_dom_sf"/>
</dbReference>
<dbReference type="NCBIfam" id="NF001861">
    <property type="entry name" value="PRK00596.1"/>
    <property type="match status" value="1"/>
</dbReference>
<dbReference type="NCBIfam" id="TIGR01049">
    <property type="entry name" value="rpsJ_bact"/>
    <property type="match status" value="1"/>
</dbReference>
<dbReference type="PANTHER" id="PTHR11700">
    <property type="entry name" value="30S RIBOSOMAL PROTEIN S10 FAMILY MEMBER"/>
    <property type="match status" value="1"/>
</dbReference>
<dbReference type="Pfam" id="PF00338">
    <property type="entry name" value="Ribosomal_S10"/>
    <property type="match status" value="1"/>
</dbReference>
<dbReference type="PRINTS" id="PR00971">
    <property type="entry name" value="RIBOSOMALS10"/>
</dbReference>
<dbReference type="SMART" id="SM01403">
    <property type="entry name" value="Ribosomal_S10"/>
    <property type="match status" value="1"/>
</dbReference>
<dbReference type="SUPFAM" id="SSF54999">
    <property type="entry name" value="Ribosomal protein S10"/>
    <property type="match status" value="1"/>
</dbReference>
<dbReference type="PROSITE" id="PS00361">
    <property type="entry name" value="RIBOSOMAL_S10"/>
    <property type="match status" value="1"/>
</dbReference>
<feature type="chain" id="PRO_1000081567" description="Small ribosomal subunit protein uS10">
    <location>
        <begin position="1"/>
        <end position="102"/>
    </location>
</feature>
<accession>A4XBP7</accession>
<protein>
    <recommendedName>
        <fullName evidence="1">Small ribosomal subunit protein uS10</fullName>
    </recommendedName>
    <alternativeName>
        <fullName evidence="2">30S ribosomal protein S10</fullName>
    </alternativeName>
</protein>
<comment type="function">
    <text evidence="1">Involved in the binding of tRNA to the ribosomes.</text>
</comment>
<comment type="subunit">
    <text evidence="1">Part of the 30S ribosomal subunit.</text>
</comment>
<comment type="similarity">
    <text evidence="1">Belongs to the universal ribosomal protein uS10 family.</text>
</comment>
<proteinExistence type="inferred from homology"/>
<name>RS10_SALTO</name>
<reference key="1">
    <citation type="journal article" date="2007" name="Proc. Natl. Acad. Sci. U.S.A.">
        <title>Genome sequencing reveals complex secondary metabolome in the marine actinomycete Salinispora tropica.</title>
        <authorList>
            <person name="Udwary D.W."/>
            <person name="Zeigler L."/>
            <person name="Asolkar R.N."/>
            <person name="Singan V."/>
            <person name="Lapidus A."/>
            <person name="Fenical W."/>
            <person name="Jensen P.R."/>
            <person name="Moore B.S."/>
        </authorList>
    </citation>
    <scope>NUCLEOTIDE SEQUENCE [LARGE SCALE GENOMIC DNA]</scope>
    <source>
        <strain>ATCC BAA-916 / DSM 44818 / JCM 13857 / NBRC 105044 / CNB-440</strain>
    </source>
</reference>
<organism>
    <name type="scientific">Salinispora tropica (strain ATCC BAA-916 / DSM 44818 / JCM 13857 / NBRC 105044 / CNB-440)</name>
    <dbReference type="NCBI Taxonomy" id="369723"/>
    <lineage>
        <taxon>Bacteria</taxon>
        <taxon>Bacillati</taxon>
        <taxon>Actinomycetota</taxon>
        <taxon>Actinomycetes</taxon>
        <taxon>Micromonosporales</taxon>
        <taxon>Micromonosporaceae</taxon>
        <taxon>Salinispora</taxon>
    </lineage>
</organism>